<feature type="chain" id="PRO_0000289246" description="Choline/ethanolaminephosphotransferase 1">
    <location>
        <begin position="1"/>
        <end position="416"/>
    </location>
</feature>
<feature type="transmembrane region" description="Helical" evidence="2">
    <location>
        <begin position="89"/>
        <end position="108"/>
    </location>
</feature>
<feature type="transmembrane region" description="Helical" evidence="2">
    <location>
        <begin position="116"/>
        <end position="133"/>
    </location>
</feature>
<feature type="transmembrane region" description="Helical" evidence="2">
    <location>
        <begin position="156"/>
        <end position="176"/>
    </location>
</feature>
<feature type="transmembrane region" description="Helical" evidence="2">
    <location>
        <begin position="180"/>
        <end position="199"/>
    </location>
</feature>
<feature type="transmembrane region" description="Helical" evidence="2">
    <location>
        <begin position="210"/>
        <end position="230"/>
    </location>
</feature>
<feature type="transmembrane region" description="Helical" evidence="2">
    <location>
        <begin position="246"/>
        <end position="267"/>
    </location>
</feature>
<feature type="transmembrane region" description="Helical" evidence="2">
    <location>
        <begin position="286"/>
        <end position="306"/>
    </location>
</feature>
<feature type="transmembrane region" description="Helical" evidence="2">
    <location>
        <begin position="315"/>
        <end position="334"/>
    </location>
</feature>
<feature type="transmembrane region" description="Helical" evidence="2">
    <location>
        <begin position="349"/>
        <end position="363"/>
    </location>
</feature>
<feature type="transmembrane region" description="Helical" evidence="2">
    <location>
        <begin position="368"/>
        <end position="388"/>
    </location>
</feature>
<feature type="region of interest" description="Disordered" evidence="4">
    <location>
        <begin position="1"/>
        <end position="20"/>
    </location>
</feature>
<feature type="active site" description="Proton acceptor" evidence="2">
    <location>
        <position position="155"/>
    </location>
</feature>
<feature type="binding site" evidence="2">
    <location>
        <position position="86"/>
    </location>
    <ligand>
        <name>CDP-choline</name>
        <dbReference type="ChEBI" id="CHEBI:58779"/>
    </ligand>
</feature>
<feature type="binding site" evidence="2">
    <location>
        <position position="133"/>
    </location>
    <ligand>
        <name>Mg(2+)</name>
        <dbReference type="ChEBI" id="CHEBI:18420"/>
        <label>1</label>
    </ligand>
</feature>
<feature type="binding site" evidence="2">
    <location>
        <position position="133"/>
    </location>
    <ligand>
        <name>Mg(2+)</name>
        <dbReference type="ChEBI" id="CHEBI:18420"/>
        <label>2</label>
    </ligand>
</feature>
<feature type="binding site" evidence="2">
    <location>
        <position position="151"/>
    </location>
    <ligand>
        <name>CDP-choline</name>
        <dbReference type="ChEBI" id="CHEBI:58779"/>
    </ligand>
</feature>
<feature type="binding site" evidence="2">
    <location>
        <position position="154"/>
    </location>
    <ligand>
        <name>Mg(2+)</name>
        <dbReference type="ChEBI" id="CHEBI:18420"/>
        <label>1</label>
    </ligand>
</feature>
<feature type="binding site" evidence="2">
    <location>
        <position position="154"/>
    </location>
    <ligand>
        <name>Mg(2+)</name>
        <dbReference type="ChEBI" id="CHEBI:18420"/>
        <label>2</label>
    </ligand>
</feature>
<feature type="binding site" evidence="2">
    <location>
        <position position="158"/>
    </location>
    <ligand>
        <name>Mg(2+)</name>
        <dbReference type="ChEBI" id="CHEBI:18420"/>
        <label>2</label>
    </ligand>
</feature>
<feature type="site" description="Increases basicity of active site His" evidence="1">
    <location>
        <position position="151"/>
    </location>
</feature>
<feature type="modified residue" description="Phosphoserine" evidence="2">
    <location>
        <position position="18"/>
    </location>
</feature>
<feature type="modified residue" description="Phosphothreonine" evidence="2">
    <location>
        <position position="40"/>
    </location>
</feature>
<feature type="glycosylation site" description="N-linked (GlcNAc...) asparagine" evidence="3">
    <location>
        <position position="144"/>
    </location>
</feature>
<feature type="splice variant" id="VSP_025988" description="In isoform 2." evidence="5">
    <original>IDVTEVQIFIIIMHLLAVIGGPPFWQSM</original>
    <variation>FDVTESQILIILFQLLSGTVGPWFWNFT</variation>
    <location>
        <begin position="211"/>
        <end position="238"/>
    </location>
</feature>
<organism>
    <name type="scientific">Mus musculus</name>
    <name type="common">Mouse</name>
    <dbReference type="NCBI Taxonomy" id="10090"/>
    <lineage>
        <taxon>Eukaryota</taxon>
        <taxon>Metazoa</taxon>
        <taxon>Chordata</taxon>
        <taxon>Craniata</taxon>
        <taxon>Vertebrata</taxon>
        <taxon>Euteleostomi</taxon>
        <taxon>Mammalia</taxon>
        <taxon>Eutheria</taxon>
        <taxon>Euarchontoglires</taxon>
        <taxon>Glires</taxon>
        <taxon>Rodentia</taxon>
        <taxon>Myomorpha</taxon>
        <taxon>Muroidea</taxon>
        <taxon>Muridae</taxon>
        <taxon>Murinae</taxon>
        <taxon>Mus</taxon>
        <taxon>Mus</taxon>
    </lineage>
</organism>
<name>CEPT1_MOUSE</name>
<proteinExistence type="evidence at protein level"/>
<evidence type="ECO:0000250" key="1">
    <source>
        <dbReference type="UniProtKB" id="Q4KLV1"/>
    </source>
</evidence>
<evidence type="ECO:0000250" key="2">
    <source>
        <dbReference type="UniProtKB" id="Q9Y6K0"/>
    </source>
</evidence>
<evidence type="ECO:0000255" key="3"/>
<evidence type="ECO:0000256" key="4">
    <source>
        <dbReference type="SAM" id="MobiDB-lite"/>
    </source>
</evidence>
<evidence type="ECO:0000303" key="5">
    <source>
    </source>
</evidence>
<evidence type="ECO:0000305" key="6"/>
<evidence type="ECO:0000312" key="7">
    <source>
        <dbReference type="MGI" id="MGI:2139793"/>
    </source>
</evidence>
<accession>Q8BGS7</accession>
<accession>Q8VC64</accession>
<dbReference type="EC" id="2.7.8.1" evidence="2"/>
<dbReference type="EC" id="2.7.8.2" evidence="2"/>
<dbReference type="EC" id="2.7.8.22" evidence="2"/>
<dbReference type="EMBL" id="AK037116">
    <property type="protein sequence ID" value="BAC29710.1"/>
    <property type="molecule type" value="mRNA"/>
</dbReference>
<dbReference type="EMBL" id="BC021753">
    <property type="protein sequence ID" value="AAH21753.1"/>
    <property type="molecule type" value="mRNA"/>
</dbReference>
<dbReference type="EMBL" id="BC023783">
    <property type="protein sequence ID" value="AAH23783.1"/>
    <property type="molecule type" value="mRNA"/>
</dbReference>
<dbReference type="CCDS" id="CCDS17723.1">
    <molecule id="Q8BGS7-1"/>
</dbReference>
<dbReference type="CCDS" id="CCDS79995.1">
    <molecule id="Q8BGS7-2"/>
</dbReference>
<dbReference type="RefSeq" id="NP_001280623.1">
    <molecule id="Q8BGS7-2"/>
    <property type="nucleotide sequence ID" value="NM_001293694.1"/>
</dbReference>
<dbReference type="RefSeq" id="NP_001344747.1">
    <molecule id="Q8BGS7-1"/>
    <property type="nucleotide sequence ID" value="NM_001357818.1"/>
</dbReference>
<dbReference type="RefSeq" id="NP_001344748.1">
    <molecule id="Q8BGS7-1"/>
    <property type="nucleotide sequence ID" value="NM_001357819.1"/>
</dbReference>
<dbReference type="RefSeq" id="NP_598630.2">
    <molecule id="Q8BGS7-1"/>
    <property type="nucleotide sequence ID" value="NM_133869.4"/>
</dbReference>
<dbReference type="RefSeq" id="XP_006502534.1">
    <molecule id="Q8BGS7-1"/>
    <property type="nucleotide sequence ID" value="XM_006502471.5"/>
</dbReference>
<dbReference type="RefSeq" id="XP_006502535.1">
    <property type="nucleotide sequence ID" value="XM_006502472.3"/>
</dbReference>
<dbReference type="RefSeq" id="XP_017175329.1">
    <property type="nucleotide sequence ID" value="XM_017319840.1"/>
</dbReference>
<dbReference type="SMR" id="Q8BGS7"/>
<dbReference type="BioGRID" id="221308">
    <property type="interactions" value="5"/>
</dbReference>
<dbReference type="FunCoup" id="Q8BGS7">
    <property type="interactions" value="3031"/>
</dbReference>
<dbReference type="STRING" id="10090.ENSMUSP00000065743"/>
<dbReference type="GlyCosmos" id="Q8BGS7">
    <property type="glycosylation" value="1 site, No reported glycans"/>
</dbReference>
<dbReference type="GlyGen" id="Q8BGS7">
    <property type="glycosylation" value="1 site"/>
</dbReference>
<dbReference type="iPTMnet" id="Q8BGS7"/>
<dbReference type="PhosphoSitePlus" id="Q8BGS7"/>
<dbReference type="SwissPalm" id="Q8BGS7"/>
<dbReference type="jPOST" id="Q8BGS7"/>
<dbReference type="PaxDb" id="10090-ENSMUSP00000065743"/>
<dbReference type="ProteomicsDB" id="280073">
    <molecule id="Q8BGS7-1"/>
</dbReference>
<dbReference type="ProteomicsDB" id="280074">
    <molecule id="Q8BGS7-2"/>
</dbReference>
<dbReference type="Pumba" id="Q8BGS7"/>
<dbReference type="Antibodypedia" id="46938">
    <property type="antibodies" value="104 antibodies from 18 providers"/>
</dbReference>
<dbReference type="DNASU" id="99712"/>
<dbReference type="Ensembl" id="ENSMUST00000039153.14">
    <molecule id="Q8BGS7-2"/>
    <property type="protein sequence ID" value="ENSMUSP00000037277.8"/>
    <property type="gene ID" value="ENSMUSG00000040774.16"/>
</dbReference>
<dbReference type="Ensembl" id="ENSMUST00000068301.11">
    <molecule id="Q8BGS7-1"/>
    <property type="protein sequence ID" value="ENSMUSP00000065743.5"/>
    <property type="gene ID" value="ENSMUSG00000040774.16"/>
</dbReference>
<dbReference type="Ensembl" id="ENSMUST00000121231.8">
    <molecule id="Q8BGS7-1"/>
    <property type="protein sequence ID" value="ENSMUSP00000112509.2"/>
    <property type="gene ID" value="ENSMUSG00000040774.16"/>
</dbReference>
<dbReference type="GeneID" id="99712"/>
<dbReference type="KEGG" id="mmu:99712"/>
<dbReference type="UCSC" id="uc008qwc.2">
    <molecule id="Q8BGS7-1"/>
    <property type="organism name" value="mouse"/>
</dbReference>
<dbReference type="UCSC" id="uc012cvs.2">
    <molecule id="Q8BGS7-2"/>
    <property type="organism name" value="mouse"/>
</dbReference>
<dbReference type="AGR" id="MGI:2139793"/>
<dbReference type="CTD" id="10390"/>
<dbReference type="MGI" id="MGI:2139793">
    <property type="gene designation" value="Cept1"/>
</dbReference>
<dbReference type="VEuPathDB" id="HostDB:ENSMUSG00000040774"/>
<dbReference type="eggNOG" id="KOG2877">
    <property type="taxonomic scope" value="Eukaryota"/>
</dbReference>
<dbReference type="GeneTree" id="ENSGT00950000183117"/>
<dbReference type="HOGENOM" id="CLU_035066_1_0_1"/>
<dbReference type="InParanoid" id="Q8BGS7"/>
<dbReference type="OMA" id="GMWMYST"/>
<dbReference type="OrthoDB" id="196717at2759"/>
<dbReference type="PhylomeDB" id="Q8BGS7"/>
<dbReference type="TreeFam" id="TF313270"/>
<dbReference type="BRENDA" id="2.7.8.1">
    <property type="organism ID" value="3474"/>
</dbReference>
<dbReference type="BRENDA" id="2.7.8.2">
    <property type="organism ID" value="3474"/>
</dbReference>
<dbReference type="Reactome" id="R-MMU-1483191">
    <property type="pathway name" value="Synthesis of PC"/>
</dbReference>
<dbReference type="Reactome" id="R-MMU-1483213">
    <property type="pathway name" value="Synthesis of PE"/>
</dbReference>
<dbReference type="UniPathway" id="UPA00558">
    <property type="reaction ID" value="UER00743"/>
</dbReference>
<dbReference type="UniPathway" id="UPA00753">
    <property type="reaction ID" value="UER00740"/>
</dbReference>
<dbReference type="BioGRID-ORCS" id="99712">
    <property type="hits" value="22 hits in 85 CRISPR screens"/>
</dbReference>
<dbReference type="ChiTaRS" id="Cept1">
    <property type="organism name" value="mouse"/>
</dbReference>
<dbReference type="PRO" id="PR:Q8BGS7"/>
<dbReference type="Proteomes" id="UP000000589">
    <property type="component" value="Chromosome 3"/>
</dbReference>
<dbReference type="RNAct" id="Q8BGS7">
    <property type="molecule type" value="protein"/>
</dbReference>
<dbReference type="Bgee" id="ENSMUSG00000040774">
    <property type="expression patterns" value="Expressed in humerus cartilage element and 249 other cell types or tissues"/>
</dbReference>
<dbReference type="ExpressionAtlas" id="Q8BGS7">
    <property type="expression patterns" value="baseline and differential"/>
</dbReference>
<dbReference type="GO" id="GO:0005789">
    <property type="term" value="C:endoplasmic reticulum membrane"/>
    <property type="evidence" value="ECO:0000314"/>
    <property type="project" value="MGI"/>
</dbReference>
<dbReference type="GO" id="GO:0031965">
    <property type="term" value="C:nuclear membrane"/>
    <property type="evidence" value="ECO:0007669"/>
    <property type="project" value="UniProtKB-SubCell"/>
</dbReference>
<dbReference type="GO" id="GO:0047359">
    <property type="term" value="F:1-alkenyl-2-acylglycerol choline phosphotransferase activity"/>
    <property type="evidence" value="ECO:0007669"/>
    <property type="project" value="UniProtKB-EC"/>
</dbReference>
<dbReference type="GO" id="GO:0004142">
    <property type="term" value="F:diacylglycerol cholinephosphotransferase activity"/>
    <property type="evidence" value="ECO:0007669"/>
    <property type="project" value="UniProtKB-EC"/>
</dbReference>
<dbReference type="GO" id="GO:0004307">
    <property type="term" value="F:ethanolaminephosphotransferase activity"/>
    <property type="evidence" value="ECO:0007669"/>
    <property type="project" value="UniProtKB-EC"/>
</dbReference>
<dbReference type="GO" id="GO:0046872">
    <property type="term" value="F:metal ion binding"/>
    <property type="evidence" value="ECO:0007669"/>
    <property type="project" value="UniProtKB-KW"/>
</dbReference>
<dbReference type="GO" id="GO:0016780">
    <property type="term" value="F:phosphotransferase activity, for other substituted phosphate groups"/>
    <property type="evidence" value="ECO:0000314"/>
    <property type="project" value="MGI"/>
</dbReference>
<dbReference type="GO" id="GO:0006656">
    <property type="term" value="P:phosphatidylcholine biosynthetic process"/>
    <property type="evidence" value="ECO:0000314"/>
    <property type="project" value="MGI"/>
</dbReference>
<dbReference type="GO" id="GO:0006646">
    <property type="term" value="P:phosphatidylethanolamine biosynthetic process"/>
    <property type="evidence" value="ECO:0007669"/>
    <property type="project" value="UniProtKB-UniPathway"/>
</dbReference>
<dbReference type="FunFam" id="1.20.120.1760:FF:000002">
    <property type="entry name" value="Choline/ethanolamine phosphotransferase 1"/>
    <property type="match status" value="1"/>
</dbReference>
<dbReference type="Gene3D" id="1.20.120.1760">
    <property type="match status" value="1"/>
</dbReference>
<dbReference type="InterPro" id="IPR000462">
    <property type="entry name" value="CDP-OH_P_trans"/>
</dbReference>
<dbReference type="InterPro" id="IPR043130">
    <property type="entry name" value="CDP-OH_PTrfase_TM_dom"/>
</dbReference>
<dbReference type="InterPro" id="IPR048254">
    <property type="entry name" value="CDP_ALCOHOL_P_TRANSF_CS"/>
</dbReference>
<dbReference type="InterPro" id="IPR014472">
    <property type="entry name" value="CHOPT"/>
</dbReference>
<dbReference type="PANTHER" id="PTHR10414:SF27">
    <property type="entry name" value="CHOLINE_ETHANOLAMINEPHOSPHOTRANSFERASE 1"/>
    <property type="match status" value="1"/>
</dbReference>
<dbReference type="PANTHER" id="PTHR10414">
    <property type="entry name" value="ETHANOLAMINEPHOSPHOTRANSFERASE"/>
    <property type="match status" value="1"/>
</dbReference>
<dbReference type="Pfam" id="PF01066">
    <property type="entry name" value="CDP-OH_P_transf"/>
    <property type="match status" value="1"/>
</dbReference>
<dbReference type="PIRSF" id="PIRSF015665">
    <property type="entry name" value="CHOPT"/>
    <property type="match status" value="1"/>
</dbReference>
<dbReference type="PROSITE" id="PS00379">
    <property type="entry name" value="CDP_ALCOHOL_P_TRANSF"/>
    <property type="match status" value="1"/>
</dbReference>
<sequence length="416" mass="46434">MSGHRSTRKRCGDSHPESPVGFGHMSTTGCVLNKLFQLPTPPLSRHQLKRLEEHRYQSAGRSLLEPLMQGYWEWLVGRVPSWIAPNLITIIGLSINICTTILLVFYCPTATEQAPLWAYIACACGLFIYQSLDAIDGKQARRTNSSSPLGELFDHGCDSLSTVFVVLGTCIAVQLGTNPDWMFFCCFAGTFMFYCAHWQTYVSGTLRFGIIDVTEVQIFIIIMHLLAVIGGPPFWQSMIPVLNIQMKLLPALCTVAGTIFSCTNYFRVIFTGGVGKNGSTIAGTSVLSPFLHIGSVITLAVMIYKKSAVQLFEKHPCLYILTFGFVSAKITNKLVVAHMTKSEMHLHDTAFIGPALLFLDQYFNSFIDEYIVLWIALIFSFFDLIRYCVSVCNQIASHLHIHVFRIKASTAHSNHH</sequence>
<comment type="function">
    <text evidence="2">Catalyzes both phosphatidylcholine and phosphatidylethanolamine biosynthesis from CDP-choline and CDP-ethanolamine, respectively. Involved in protein-dependent process of phospholipid transport to distribute phosphatidyl choline to the lumenal surface. Has a higher cholinephosphotransferase activity than ethanolaminephosphotransferase activity.</text>
</comment>
<comment type="catalytic activity">
    <reaction evidence="2">
        <text>CDP-ethanolamine + a 1,2-diacyl-sn-glycerol = a 1,2-diacyl-sn-glycero-3-phosphoethanolamine + CMP + H(+)</text>
        <dbReference type="Rhea" id="RHEA:32943"/>
        <dbReference type="ChEBI" id="CHEBI:15378"/>
        <dbReference type="ChEBI" id="CHEBI:17815"/>
        <dbReference type="ChEBI" id="CHEBI:57876"/>
        <dbReference type="ChEBI" id="CHEBI:60377"/>
        <dbReference type="ChEBI" id="CHEBI:64612"/>
        <dbReference type="EC" id="2.7.8.1"/>
    </reaction>
    <physiologicalReaction direction="left-to-right" evidence="2">
        <dbReference type="Rhea" id="RHEA:32944"/>
    </physiologicalReaction>
</comment>
<comment type="catalytic activity">
    <reaction evidence="2">
        <text>CDP-choline + a 1,2-diacyl-sn-glycerol = a 1,2-diacyl-sn-glycero-3-phosphocholine + CMP + H(+)</text>
        <dbReference type="Rhea" id="RHEA:32939"/>
        <dbReference type="ChEBI" id="CHEBI:15378"/>
        <dbReference type="ChEBI" id="CHEBI:17815"/>
        <dbReference type="ChEBI" id="CHEBI:57643"/>
        <dbReference type="ChEBI" id="CHEBI:58779"/>
        <dbReference type="ChEBI" id="CHEBI:60377"/>
        <dbReference type="EC" id="2.7.8.2"/>
    </reaction>
    <physiologicalReaction direction="left-to-right" evidence="2">
        <dbReference type="Rhea" id="RHEA:32940"/>
    </physiologicalReaction>
</comment>
<comment type="catalytic activity">
    <reaction evidence="2">
        <text>1-O-alkyl-2-acyl-sn-glycerol + CDP-choline = a 1-O-alkyl-2-acyl-sn-glycero-3-phosphocholine + CMP + H(+)</text>
        <dbReference type="Rhea" id="RHEA:36179"/>
        <dbReference type="ChEBI" id="CHEBI:15378"/>
        <dbReference type="ChEBI" id="CHEBI:36702"/>
        <dbReference type="ChEBI" id="CHEBI:52595"/>
        <dbReference type="ChEBI" id="CHEBI:58779"/>
        <dbReference type="ChEBI" id="CHEBI:60377"/>
        <dbReference type="EC" id="2.7.8.2"/>
    </reaction>
    <physiologicalReaction direction="left-to-right" evidence="2">
        <dbReference type="Rhea" id="RHEA:36180"/>
    </physiologicalReaction>
</comment>
<comment type="catalytic activity">
    <reaction evidence="2">
        <text>a 1-O-(1Z-alkenyl)-2-acyl-sn-glycerol + CDP-choline = a 1-O-(1Z-alkenyl)-2-acyl-sn-glycero-3-phosphocholine + CMP + H(+)</text>
        <dbReference type="Rhea" id="RHEA:36227"/>
        <dbReference type="ChEBI" id="CHEBI:15378"/>
        <dbReference type="ChEBI" id="CHEBI:58779"/>
        <dbReference type="ChEBI" id="CHEBI:60377"/>
        <dbReference type="ChEBI" id="CHEBI:77286"/>
        <dbReference type="ChEBI" id="CHEBI:77296"/>
        <dbReference type="EC" id="2.7.8.22"/>
    </reaction>
    <physiologicalReaction direction="left-to-right" evidence="2">
        <dbReference type="Rhea" id="RHEA:36228"/>
    </physiologicalReaction>
</comment>
<comment type="catalytic activity">
    <reaction evidence="2">
        <text>1,2-dioctanoyl-sn-glycerol + CDP-choline = 1,2-dioctanoyl-sn-glycero-3-phosphocholine + CMP + H(+)</text>
        <dbReference type="Rhea" id="RHEA:54232"/>
        <dbReference type="ChEBI" id="CHEBI:15378"/>
        <dbReference type="ChEBI" id="CHEBI:58779"/>
        <dbReference type="ChEBI" id="CHEBI:60377"/>
        <dbReference type="ChEBI" id="CHEBI:76979"/>
        <dbReference type="ChEBI" id="CHEBI:78228"/>
    </reaction>
    <physiologicalReaction direction="left-to-right" evidence="2">
        <dbReference type="Rhea" id="RHEA:54233"/>
    </physiologicalReaction>
</comment>
<comment type="catalytic activity">
    <reaction evidence="2">
        <text>1,2-didecanoyl-sn-glycerol + CDP-choline = 1,2-didecanoyl-sn-glycero-3-phosphocholine + CMP + H(+)</text>
        <dbReference type="Rhea" id="RHEA:54236"/>
        <dbReference type="ChEBI" id="CHEBI:15378"/>
        <dbReference type="ChEBI" id="CHEBI:18155"/>
        <dbReference type="ChEBI" id="CHEBI:58779"/>
        <dbReference type="ChEBI" id="CHEBI:60377"/>
        <dbReference type="ChEBI" id="CHEBI:78226"/>
    </reaction>
    <physiologicalReaction direction="left-to-right" evidence="2">
        <dbReference type="Rhea" id="RHEA:54237"/>
    </physiologicalReaction>
</comment>
<comment type="catalytic activity">
    <reaction evidence="2">
        <text>CDP-choline + 1,2-di-(9Z-octadecenoyl)-sn-glycerol = 1,2-di-(9Z-octadecenoyl)-sn-glycero-3-phosphocholine + CMP + H(+)</text>
        <dbReference type="Rhea" id="RHEA:54240"/>
        <dbReference type="ChEBI" id="CHEBI:15378"/>
        <dbReference type="ChEBI" id="CHEBI:52333"/>
        <dbReference type="ChEBI" id="CHEBI:58779"/>
        <dbReference type="ChEBI" id="CHEBI:60377"/>
        <dbReference type="ChEBI" id="CHEBI:74669"/>
    </reaction>
    <physiologicalReaction direction="left-to-right" evidence="2">
        <dbReference type="Rhea" id="RHEA:54241"/>
    </physiologicalReaction>
</comment>
<comment type="catalytic activity">
    <reaction evidence="2">
        <text>1-hexadecanoyl-2-(9Z-octadecenoyl)-sn-glycerol + CDP-choline = 1-hexadecanoyl-2-(9Z-octadecenoyl)-sn-glycero-3-phosphocholine + CMP + H(+)</text>
        <dbReference type="Rhea" id="RHEA:54244"/>
        <dbReference type="ChEBI" id="CHEBI:15378"/>
        <dbReference type="ChEBI" id="CHEBI:58779"/>
        <dbReference type="ChEBI" id="CHEBI:60377"/>
        <dbReference type="ChEBI" id="CHEBI:73001"/>
        <dbReference type="ChEBI" id="CHEBI:75466"/>
    </reaction>
    <physiologicalReaction direction="left-to-right" evidence="2">
        <dbReference type="Rhea" id="RHEA:54245"/>
    </physiologicalReaction>
</comment>
<comment type="catalytic activity">
    <reaction evidence="2">
        <text>CDP-ethanolamine + 1,2-di-(9Z-octadecenoyl)-sn-glycerol = 1,2-di-(9Z-octadecenoyl)-sn-glycero-3-phosphoethanolamine + CMP + H(+)</text>
        <dbReference type="Rhea" id="RHEA:54248"/>
        <dbReference type="ChEBI" id="CHEBI:15378"/>
        <dbReference type="ChEBI" id="CHEBI:52333"/>
        <dbReference type="ChEBI" id="CHEBI:57876"/>
        <dbReference type="ChEBI" id="CHEBI:60377"/>
        <dbReference type="ChEBI" id="CHEBI:74986"/>
    </reaction>
    <physiologicalReaction direction="left-to-right" evidence="2">
        <dbReference type="Rhea" id="RHEA:54249"/>
    </physiologicalReaction>
</comment>
<comment type="catalytic activity">
    <reaction evidence="2">
        <text>1-hexadecanoyl-2-(9Z-octadecenoyl)-sn-glycerol + CDP-ethanolamine = 1-hexadecanoyl-2-(9Z-octadecenoyl)-sn-glycero-3-phosphoethanolamine + CMP + H(+)</text>
        <dbReference type="Rhea" id="RHEA:54252"/>
        <dbReference type="ChEBI" id="CHEBI:15378"/>
        <dbReference type="ChEBI" id="CHEBI:57876"/>
        <dbReference type="ChEBI" id="CHEBI:60377"/>
        <dbReference type="ChEBI" id="CHEBI:73007"/>
        <dbReference type="ChEBI" id="CHEBI:75466"/>
    </reaction>
    <physiologicalReaction direction="left-to-right" evidence="2">
        <dbReference type="Rhea" id="RHEA:54253"/>
    </physiologicalReaction>
</comment>
<comment type="catalytic activity">
    <reaction evidence="2">
        <text>1-hexadecanoyl-2-(4Z,7Z,10Z,13Z,16Z,19Z-docosahexaenoyl)-sn-glycerol + CDP-choline = 1-hexadecanoyl-2-(4Z,7Z,10Z,13Z,16Z,19Z-docosahexaenoyl)-sn-glycero-3-phosphocholine + CMP + H(+)</text>
        <dbReference type="Rhea" id="RHEA:54332"/>
        <dbReference type="ChEBI" id="CHEBI:15378"/>
        <dbReference type="ChEBI" id="CHEBI:58779"/>
        <dbReference type="ChEBI" id="CHEBI:60377"/>
        <dbReference type="ChEBI" id="CHEBI:74963"/>
        <dbReference type="ChEBI" id="CHEBI:82949"/>
    </reaction>
    <physiologicalReaction direction="left-to-right" evidence="2">
        <dbReference type="Rhea" id="RHEA:54333"/>
    </physiologicalReaction>
</comment>
<comment type="catalytic activity">
    <reaction evidence="2">
        <text>1,2-di-(9Z-hexadecenoyl)-sn-glycerol + CDP-choline = 1,2-di-(9Z-hexadecenoyl)-sn-glycero-3-phosphocholine + CMP + H(+)</text>
        <dbReference type="Rhea" id="RHEA:54336"/>
        <dbReference type="ChEBI" id="CHEBI:15378"/>
        <dbReference type="ChEBI" id="CHEBI:58779"/>
        <dbReference type="ChEBI" id="CHEBI:60377"/>
        <dbReference type="ChEBI" id="CHEBI:83717"/>
        <dbReference type="ChEBI" id="CHEBI:84417"/>
    </reaction>
    <physiologicalReaction direction="left-to-right" evidence="2">
        <dbReference type="Rhea" id="RHEA:54337"/>
    </physiologicalReaction>
</comment>
<comment type="catalytic activity">
    <reaction evidence="2">
        <text>1,2-di-(9Z-hexadecenoyl)-sn-glycerol + CDP-ethanolamine = 1,2-di-(9Z-hexadecenoyl)-sn-glycero-3-phosphoethanolamine + CMP + H(+)</text>
        <dbReference type="Rhea" id="RHEA:54340"/>
        <dbReference type="ChEBI" id="CHEBI:15378"/>
        <dbReference type="ChEBI" id="CHEBI:57876"/>
        <dbReference type="ChEBI" id="CHEBI:60377"/>
        <dbReference type="ChEBI" id="CHEBI:84417"/>
        <dbReference type="ChEBI" id="CHEBI:138145"/>
    </reaction>
    <physiologicalReaction direction="left-to-right" evidence="2">
        <dbReference type="Rhea" id="RHEA:54341"/>
    </physiologicalReaction>
</comment>
<comment type="catalytic activity">
    <reaction evidence="2">
        <text>1-O-hexadecyl-2-acetyl-sn-glycerol + CDP-choline = 1-O-hexadecyl-2-acetyl-sn-glycero-3-phosphocholine + CMP + H(+)</text>
        <dbReference type="Rhea" id="RHEA:54348"/>
        <dbReference type="ChEBI" id="CHEBI:15378"/>
        <dbReference type="ChEBI" id="CHEBI:44811"/>
        <dbReference type="ChEBI" id="CHEBI:58779"/>
        <dbReference type="ChEBI" id="CHEBI:60377"/>
        <dbReference type="ChEBI" id="CHEBI:75936"/>
    </reaction>
    <physiologicalReaction direction="left-to-right" evidence="2">
        <dbReference type="Rhea" id="RHEA:54349"/>
    </physiologicalReaction>
</comment>
<comment type="catalytic activity">
    <reaction evidence="2">
        <text>1-O-hexadecyl-2-(5Z,8Z,11Z,14Z-eicosatetraenoyl)-sn-glycerol + CDP-choline = 1-O-hexadecyl-2-(5Z,8Z,11Z,14Z)-eicosatetraenoyl-sn-glycero-3-phosphocholine + CMP + H(+)</text>
        <dbReference type="Rhea" id="RHEA:54352"/>
        <dbReference type="ChEBI" id="CHEBI:15378"/>
        <dbReference type="ChEBI" id="CHEBI:55430"/>
        <dbReference type="ChEBI" id="CHEBI:58779"/>
        <dbReference type="ChEBI" id="CHEBI:60377"/>
        <dbReference type="ChEBI" id="CHEBI:77184"/>
    </reaction>
    <physiologicalReaction direction="left-to-right" evidence="2">
        <dbReference type="Rhea" id="RHEA:54353"/>
    </physiologicalReaction>
</comment>
<comment type="cofactor">
    <cofactor evidence="2">
        <name>Mg(2+)</name>
        <dbReference type="ChEBI" id="CHEBI:18420"/>
    </cofactor>
    <cofactor evidence="2">
        <name>Mn(2+)</name>
        <dbReference type="ChEBI" id="CHEBI:29035"/>
    </cofactor>
</comment>
<comment type="pathway">
    <text evidence="2">Phospholipid metabolism; phosphatidylethanolamine biosynthesis; phosphatidylethanolamine from ethanolamine: step 3/3.</text>
</comment>
<comment type="pathway">
    <text evidence="2">Phospholipid metabolism; phosphatidylcholine biosynthesis; phosphatidylcholine from phosphocholine: step 2/2.</text>
</comment>
<comment type="subunit">
    <text evidence="2">Homodimer.</text>
</comment>
<comment type="subcellular location">
    <subcellularLocation>
        <location evidence="2">Endoplasmic reticulum membrane</location>
        <topology evidence="2">Multi-pass membrane protein</topology>
    </subcellularLocation>
    <subcellularLocation>
        <location evidence="2">Nucleus membrane</location>
        <topology evidence="2">Multi-pass membrane protein</topology>
    </subcellularLocation>
</comment>
<comment type="alternative products">
    <event type="alternative splicing"/>
    <isoform>
        <id>Q8BGS7-1</id>
        <name>1</name>
        <sequence type="displayed"/>
    </isoform>
    <isoform>
        <id>Q8BGS7-2</id>
        <name>2</name>
        <sequence type="described" ref="VSP_025988"/>
    </isoform>
</comment>
<comment type="similarity">
    <text evidence="6">Belongs to the CDP-alcohol phosphatidyltransferase class-I family.</text>
</comment>
<reference key="1">
    <citation type="journal article" date="2005" name="Science">
        <title>The transcriptional landscape of the mammalian genome.</title>
        <authorList>
            <person name="Carninci P."/>
            <person name="Kasukawa T."/>
            <person name="Katayama S."/>
            <person name="Gough J."/>
            <person name="Frith M.C."/>
            <person name="Maeda N."/>
            <person name="Oyama R."/>
            <person name="Ravasi T."/>
            <person name="Lenhard B."/>
            <person name="Wells C."/>
            <person name="Kodzius R."/>
            <person name="Shimokawa K."/>
            <person name="Bajic V.B."/>
            <person name="Brenner S.E."/>
            <person name="Batalov S."/>
            <person name="Forrest A.R."/>
            <person name="Zavolan M."/>
            <person name="Davis M.J."/>
            <person name="Wilming L.G."/>
            <person name="Aidinis V."/>
            <person name="Allen J.E."/>
            <person name="Ambesi-Impiombato A."/>
            <person name="Apweiler R."/>
            <person name="Aturaliya R.N."/>
            <person name="Bailey T.L."/>
            <person name="Bansal M."/>
            <person name="Baxter L."/>
            <person name="Beisel K.W."/>
            <person name="Bersano T."/>
            <person name="Bono H."/>
            <person name="Chalk A.M."/>
            <person name="Chiu K.P."/>
            <person name="Choudhary V."/>
            <person name="Christoffels A."/>
            <person name="Clutterbuck D.R."/>
            <person name="Crowe M.L."/>
            <person name="Dalla E."/>
            <person name="Dalrymple B.P."/>
            <person name="de Bono B."/>
            <person name="Della Gatta G."/>
            <person name="di Bernardo D."/>
            <person name="Down T."/>
            <person name="Engstrom P."/>
            <person name="Fagiolini M."/>
            <person name="Faulkner G."/>
            <person name="Fletcher C.F."/>
            <person name="Fukushima T."/>
            <person name="Furuno M."/>
            <person name="Futaki S."/>
            <person name="Gariboldi M."/>
            <person name="Georgii-Hemming P."/>
            <person name="Gingeras T.R."/>
            <person name="Gojobori T."/>
            <person name="Green R.E."/>
            <person name="Gustincich S."/>
            <person name="Harbers M."/>
            <person name="Hayashi Y."/>
            <person name="Hensch T.K."/>
            <person name="Hirokawa N."/>
            <person name="Hill D."/>
            <person name="Huminiecki L."/>
            <person name="Iacono M."/>
            <person name="Ikeo K."/>
            <person name="Iwama A."/>
            <person name="Ishikawa T."/>
            <person name="Jakt M."/>
            <person name="Kanapin A."/>
            <person name="Katoh M."/>
            <person name="Kawasawa Y."/>
            <person name="Kelso J."/>
            <person name="Kitamura H."/>
            <person name="Kitano H."/>
            <person name="Kollias G."/>
            <person name="Krishnan S.P."/>
            <person name="Kruger A."/>
            <person name="Kummerfeld S.K."/>
            <person name="Kurochkin I.V."/>
            <person name="Lareau L.F."/>
            <person name="Lazarevic D."/>
            <person name="Lipovich L."/>
            <person name="Liu J."/>
            <person name="Liuni S."/>
            <person name="McWilliam S."/>
            <person name="Madan Babu M."/>
            <person name="Madera M."/>
            <person name="Marchionni L."/>
            <person name="Matsuda H."/>
            <person name="Matsuzawa S."/>
            <person name="Miki H."/>
            <person name="Mignone F."/>
            <person name="Miyake S."/>
            <person name="Morris K."/>
            <person name="Mottagui-Tabar S."/>
            <person name="Mulder N."/>
            <person name="Nakano N."/>
            <person name="Nakauchi H."/>
            <person name="Ng P."/>
            <person name="Nilsson R."/>
            <person name="Nishiguchi S."/>
            <person name="Nishikawa S."/>
            <person name="Nori F."/>
            <person name="Ohara O."/>
            <person name="Okazaki Y."/>
            <person name="Orlando V."/>
            <person name="Pang K.C."/>
            <person name="Pavan W.J."/>
            <person name="Pavesi G."/>
            <person name="Pesole G."/>
            <person name="Petrovsky N."/>
            <person name="Piazza S."/>
            <person name="Reed J."/>
            <person name="Reid J.F."/>
            <person name="Ring B.Z."/>
            <person name="Ringwald M."/>
            <person name="Rost B."/>
            <person name="Ruan Y."/>
            <person name="Salzberg S.L."/>
            <person name="Sandelin A."/>
            <person name="Schneider C."/>
            <person name="Schoenbach C."/>
            <person name="Sekiguchi K."/>
            <person name="Semple C.A."/>
            <person name="Seno S."/>
            <person name="Sessa L."/>
            <person name="Sheng Y."/>
            <person name="Shibata Y."/>
            <person name="Shimada H."/>
            <person name="Shimada K."/>
            <person name="Silva D."/>
            <person name="Sinclair B."/>
            <person name="Sperling S."/>
            <person name="Stupka E."/>
            <person name="Sugiura K."/>
            <person name="Sultana R."/>
            <person name="Takenaka Y."/>
            <person name="Taki K."/>
            <person name="Tammoja K."/>
            <person name="Tan S.L."/>
            <person name="Tang S."/>
            <person name="Taylor M.S."/>
            <person name="Tegner J."/>
            <person name="Teichmann S.A."/>
            <person name="Ueda H.R."/>
            <person name="van Nimwegen E."/>
            <person name="Verardo R."/>
            <person name="Wei C.L."/>
            <person name="Yagi K."/>
            <person name="Yamanishi H."/>
            <person name="Zabarovsky E."/>
            <person name="Zhu S."/>
            <person name="Zimmer A."/>
            <person name="Hide W."/>
            <person name="Bult C."/>
            <person name="Grimmond S.M."/>
            <person name="Teasdale R.D."/>
            <person name="Liu E.T."/>
            <person name="Brusic V."/>
            <person name="Quackenbush J."/>
            <person name="Wahlestedt C."/>
            <person name="Mattick J.S."/>
            <person name="Hume D.A."/>
            <person name="Kai C."/>
            <person name="Sasaki D."/>
            <person name="Tomaru Y."/>
            <person name="Fukuda S."/>
            <person name="Kanamori-Katayama M."/>
            <person name="Suzuki M."/>
            <person name="Aoki J."/>
            <person name="Arakawa T."/>
            <person name="Iida J."/>
            <person name="Imamura K."/>
            <person name="Itoh M."/>
            <person name="Kato T."/>
            <person name="Kawaji H."/>
            <person name="Kawagashira N."/>
            <person name="Kawashima T."/>
            <person name="Kojima M."/>
            <person name="Kondo S."/>
            <person name="Konno H."/>
            <person name="Nakano K."/>
            <person name="Ninomiya N."/>
            <person name="Nishio T."/>
            <person name="Okada M."/>
            <person name="Plessy C."/>
            <person name="Shibata K."/>
            <person name="Shiraki T."/>
            <person name="Suzuki S."/>
            <person name="Tagami M."/>
            <person name="Waki K."/>
            <person name="Watahiki A."/>
            <person name="Okamura-Oho Y."/>
            <person name="Suzuki H."/>
            <person name="Kawai J."/>
            <person name="Hayashizaki Y."/>
        </authorList>
    </citation>
    <scope>NUCLEOTIDE SEQUENCE [LARGE SCALE MRNA] (ISOFORM 1)</scope>
    <source>
        <strain>C57BL/6J</strain>
        <tissue>Vagina</tissue>
    </source>
</reference>
<reference key="2">
    <citation type="journal article" date="2004" name="Genome Res.">
        <title>The status, quality, and expansion of the NIH full-length cDNA project: the Mammalian Gene Collection (MGC).</title>
        <authorList>
            <consortium name="The MGC Project Team"/>
        </authorList>
    </citation>
    <scope>NUCLEOTIDE SEQUENCE [LARGE SCALE MRNA] (ISOFORMS 1 AND 2)</scope>
    <source>
        <strain>FVB/N</strain>
        <tissue>Mammary tumor</tissue>
        <tissue>Salivary gland</tissue>
    </source>
</reference>
<reference key="3">
    <citation type="journal article" date="2010" name="Cell">
        <title>A tissue-specific atlas of mouse protein phosphorylation and expression.</title>
        <authorList>
            <person name="Huttlin E.L."/>
            <person name="Jedrychowski M.P."/>
            <person name="Elias J.E."/>
            <person name="Goswami T."/>
            <person name="Rad R."/>
            <person name="Beausoleil S.A."/>
            <person name="Villen J."/>
            <person name="Haas W."/>
            <person name="Sowa M.E."/>
            <person name="Gygi S.P."/>
        </authorList>
    </citation>
    <scope>IDENTIFICATION BY MASS SPECTROMETRY [LARGE SCALE ANALYSIS]</scope>
    <source>
        <tissue>Brown adipose tissue</tissue>
        <tissue>Liver</tissue>
        <tissue>Lung</tissue>
        <tissue>Pancreas</tissue>
        <tissue>Spleen</tissue>
    </source>
</reference>
<gene>
    <name evidence="7" type="primary">Cept1</name>
</gene>
<keyword id="KW-0025">Alternative splicing</keyword>
<keyword id="KW-0256">Endoplasmic reticulum</keyword>
<keyword id="KW-0325">Glycoprotein</keyword>
<keyword id="KW-0444">Lipid biosynthesis</keyword>
<keyword id="KW-0443">Lipid metabolism</keyword>
<keyword id="KW-0460">Magnesium</keyword>
<keyword id="KW-0464">Manganese</keyword>
<keyword id="KW-0472">Membrane</keyword>
<keyword id="KW-0479">Metal-binding</keyword>
<keyword id="KW-0539">Nucleus</keyword>
<keyword id="KW-0594">Phospholipid biosynthesis</keyword>
<keyword id="KW-1208">Phospholipid metabolism</keyword>
<keyword id="KW-0597">Phosphoprotein</keyword>
<keyword id="KW-1185">Reference proteome</keyword>
<keyword id="KW-0808">Transferase</keyword>
<keyword id="KW-0812">Transmembrane</keyword>
<keyword id="KW-1133">Transmembrane helix</keyword>
<protein>
    <recommendedName>
        <fullName evidence="6">Choline/ethanolaminephosphotransferase 1</fullName>
        <shortName>mCEPT1</shortName>
        <ecNumber evidence="2">2.7.8.1</ecNumber>
        <ecNumber evidence="2">2.7.8.2</ecNumber>
    </recommendedName>
    <alternativeName>
        <fullName evidence="6">1-alkenyl-2-acylglycerol choline phosphotransferase</fullName>
        <ecNumber evidence="2">2.7.8.22</ecNumber>
    </alternativeName>
</protein>